<keyword id="KW-0027">Amidation</keyword>
<keyword id="KW-0165">Cleavage on pair of basic residues</keyword>
<keyword id="KW-0372">Hormone</keyword>
<keyword id="KW-0527">Neuropeptide</keyword>
<keyword id="KW-1185">Reference proteome</keyword>
<keyword id="KW-0964">Secreted</keyword>
<keyword id="KW-0732">Signal</keyword>
<comment type="function">
    <text>Gastrointestinal hormone and neuropeptide.</text>
</comment>
<comment type="subcellular location">
    <subcellularLocation>
        <location>Secreted</location>
    </subcellularLocation>
</comment>
<comment type="similarity">
    <text evidence="2">Belongs to the NPY family.</text>
</comment>
<gene>
    <name type="primary">pyy</name>
</gene>
<protein>
    <recommendedName>
        <fullName>Peptide YY-like</fullName>
        <shortName>PYY</shortName>
    </recommendedName>
</protein>
<organism>
    <name type="scientific">Dicentrarchus labrax</name>
    <name type="common">European seabass</name>
    <name type="synonym">Morone labrax</name>
    <dbReference type="NCBI Taxonomy" id="13489"/>
    <lineage>
        <taxon>Eukaryota</taxon>
        <taxon>Metazoa</taxon>
        <taxon>Chordata</taxon>
        <taxon>Craniata</taxon>
        <taxon>Vertebrata</taxon>
        <taxon>Euteleostomi</taxon>
        <taxon>Actinopterygii</taxon>
        <taxon>Neopterygii</taxon>
        <taxon>Teleostei</taxon>
        <taxon>Neoteleostei</taxon>
        <taxon>Acanthomorphata</taxon>
        <taxon>Eupercaria</taxon>
        <taxon>Moronidae</taxon>
        <taxon>Dicentrarchus</taxon>
    </lineage>
</organism>
<dbReference type="EMBL" id="AJ005379">
    <property type="protein sequence ID" value="CAB64933.1"/>
    <property type="molecule type" value="mRNA"/>
</dbReference>
<dbReference type="SMR" id="Q9PT99"/>
<dbReference type="OMA" id="YPAKPAN"/>
<dbReference type="OrthoDB" id="9852947at2759"/>
<dbReference type="Proteomes" id="UP000694389">
    <property type="component" value="Unplaced"/>
</dbReference>
<dbReference type="GO" id="GO:0005615">
    <property type="term" value="C:extracellular space"/>
    <property type="evidence" value="ECO:0007669"/>
    <property type="project" value="TreeGrafter"/>
</dbReference>
<dbReference type="GO" id="GO:0005184">
    <property type="term" value="F:neuropeptide hormone activity"/>
    <property type="evidence" value="ECO:0007669"/>
    <property type="project" value="TreeGrafter"/>
</dbReference>
<dbReference type="GO" id="GO:0031841">
    <property type="term" value="F:neuropeptide Y receptor binding"/>
    <property type="evidence" value="ECO:0007669"/>
    <property type="project" value="TreeGrafter"/>
</dbReference>
<dbReference type="GO" id="GO:0007631">
    <property type="term" value="P:feeding behavior"/>
    <property type="evidence" value="ECO:0007669"/>
    <property type="project" value="TreeGrafter"/>
</dbReference>
<dbReference type="GO" id="GO:0007218">
    <property type="term" value="P:neuropeptide signaling pathway"/>
    <property type="evidence" value="ECO:0007669"/>
    <property type="project" value="UniProtKB-KW"/>
</dbReference>
<dbReference type="CDD" id="cd00126">
    <property type="entry name" value="PAH"/>
    <property type="match status" value="1"/>
</dbReference>
<dbReference type="Gene3D" id="6.10.250.900">
    <property type="match status" value="1"/>
</dbReference>
<dbReference type="InterPro" id="IPR001955">
    <property type="entry name" value="Pancreatic_hormone-like"/>
</dbReference>
<dbReference type="InterPro" id="IPR020392">
    <property type="entry name" value="Pancreatic_hormone-like_CS"/>
</dbReference>
<dbReference type="PANTHER" id="PTHR10533">
    <property type="entry name" value="NEUROPEPTIDE Y/PANCREATIC HORMONE/PEPTIDE YY"/>
    <property type="match status" value="1"/>
</dbReference>
<dbReference type="PANTHER" id="PTHR10533:SF5">
    <property type="entry name" value="PRO-NEUROPEPTIDE Y"/>
    <property type="match status" value="1"/>
</dbReference>
<dbReference type="Pfam" id="PF00159">
    <property type="entry name" value="Hormone_3"/>
    <property type="match status" value="1"/>
</dbReference>
<dbReference type="PRINTS" id="PR00278">
    <property type="entry name" value="PANCHORMONE"/>
</dbReference>
<dbReference type="SMART" id="SM00309">
    <property type="entry name" value="PAH"/>
    <property type="match status" value="1"/>
</dbReference>
<dbReference type="PROSITE" id="PS00265">
    <property type="entry name" value="PANCREATIC_HORMONE_1"/>
    <property type="match status" value="1"/>
</dbReference>
<dbReference type="PROSITE" id="PS50276">
    <property type="entry name" value="PANCREATIC_HORMONE_2"/>
    <property type="match status" value="1"/>
</dbReference>
<proteinExistence type="inferred from homology"/>
<evidence type="ECO:0000255" key="1"/>
<evidence type="ECO:0000305" key="2"/>
<name>PYY_DICLA</name>
<sequence length="99" mass="11065">MIHSGAVMSMSILAFCLLACIHSGINAYPAKPASPRDGAPPEELAKYYSALRHYINLITRQRYGKRDTPDTVFSDVLMRESTESIPGSNYVRYDGLPLW</sequence>
<accession>Q9PT99</accession>
<feature type="signal peptide" evidence="1">
    <location>
        <begin position="1"/>
        <end position="27"/>
    </location>
</feature>
<feature type="peptide" id="PRO_0000025399" description="Peptide YY-like">
    <location>
        <begin position="28"/>
        <end position="63"/>
    </location>
</feature>
<feature type="propeptide" id="PRO_0000025400" description="C-terminal extension">
    <location>
        <begin position="65"/>
        <end position="99"/>
    </location>
</feature>
<feature type="modified residue" description="Tyrosine amide" evidence="1">
    <location>
        <position position="63"/>
    </location>
</feature>
<reference key="1">
    <citation type="journal article" date="1998" name="Ann. N. Y. Acad. Sci.">
        <title>Cloning of neuropeptide Y, peptide YY, and peptide Y from sea bass (Dicentrarchus labrax), a marine teleost.</title>
        <authorList>
            <person name="Cerda-Reverter J.M."/>
            <person name="Martinez-Rodriguez G."/>
            <person name="Zanuy S."/>
            <person name="Carrillo M."/>
            <person name="Larhammar D."/>
        </authorList>
    </citation>
    <scope>NUCLEOTIDE SEQUENCE [MRNA]</scope>
    <source>
        <tissue>Brain</tissue>
    </source>
</reference>